<dbReference type="PIR" id="A01304">
    <property type="entry name" value="TIVTOA"/>
</dbReference>
<dbReference type="SMR" id="P01065"/>
<dbReference type="MEROPS" id="I12.002"/>
<dbReference type="GO" id="GO:0005576">
    <property type="term" value="C:extracellular region"/>
    <property type="evidence" value="ECO:0007669"/>
    <property type="project" value="InterPro"/>
</dbReference>
<dbReference type="GO" id="GO:0004867">
    <property type="term" value="F:serine-type endopeptidase inhibitor activity"/>
    <property type="evidence" value="ECO:0007669"/>
    <property type="project" value="UniProtKB-KW"/>
</dbReference>
<dbReference type="CDD" id="cd00023">
    <property type="entry name" value="BBI"/>
    <property type="match status" value="1"/>
</dbReference>
<dbReference type="FunFam" id="2.10.69.10:FF:000001">
    <property type="entry name" value="Bowman-Birk type proteinase inhibitor"/>
    <property type="match status" value="1"/>
</dbReference>
<dbReference type="Gene3D" id="2.10.69.10">
    <property type="entry name" value="Cysteine Protease (Bromelain) Inhibitor, subunit H"/>
    <property type="match status" value="1"/>
</dbReference>
<dbReference type="InterPro" id="IPR035995">
    <property type="entry name" value="Bowman-Birk_prot_inh"/>
</dbReference>
<dbReference type="InterPro" id="IPR000877">
    <property type="entry name" value="Prot_inh_BBI"/>
</dbReference>
<dbReference type="Pfam" id="PF00228">
    <property type="entry name" value="Bowman-Birk_leg"/>
    <property type="match status" value="2"/>
</dbReference>
<dbReference type="SMART" id="SM00269">
    <property type="entry name" value="BowB"/>
    <property type="match status" value="1"/>
</dbReference>
<dbReference type="SUPFAM" id="SSF57247">
    <property type="entry name" value="Bowman-Birk inhibitor, BBI"/>
    <property type="match status" value="1"/>
</dbReference>
<dbReference type="PROSITE" id="PS00281">
    <property type="entry name" value="BOWMAN_BIRK"/>
    <property type="match status" value="1"/>
</dbReference>
<protein>
    <recommendedName>
        <fullName>Bowman-Birk type proteinase inhibitor</fullName>
    </recommendedName>
    <alternativeName>
        <fullName>VAI</fullName>
    </alternativeName>
</protein>
<keyword id="KW-0903">Direct protein sequencing</keyword>
<keyword id="KW-1015">Disulfide bond</keyword>
<keyword id="KW-0646">Protease inhibitor</keyword>
<keyword id="KW-0722">Serine protease inhibitor</keyword>
<reference key="1">
    <citation type="journal article" date="1983" name="Nat. Cult.">
        <title>The complete amino acid sequence of Vicia angustifolia proteinase inhibitor.</title>
        <authorList>
            <person name="Shimokawa Y."/>
            <person name="Kuromizu K."/>
            <person name="Araki T."/>
            <person name="Ohata J."/>
            <person name="Abe O."/>
        </authorList>
    </citation>
    <scope>PROTEIN SEQUENCE</scope>
    <source>
        <strain>cv. Segetalis</strain>
    </source>
</reference>
<evidence type="ECO:0000250" key="1">
    <source>
        <dbReference type="UniProtKB" id="P80321"/>
    </source>
</evidence>
<evidence type="ECO:0000305" key="2"/>
<sequence>GDDVKSACCDTCLCTRSQPPTCRCVDVGERCHSACNHCVCNYSNPPQCQCFDTHKFCYKACHSSEKEEVIKN</sequence>
<proteinExistence type="evidence at protein level"/>
<comment type="function">
    <text>This inhibitor has two domains, each with separate antiprotease activity. 1 mole of inhibitor inhibits either 1 mole of trypsin or 2 moles of chymotrypsin, stoichiometrically.</text>
</comment>
<comment type="similarity">
    <text evidence="2">Belongs to the Bowman-Birk serine protease inhibitor family.</text>
</comment>
<feature type="chain" id="PRO_0000105854" description="Bowman-Birk type proteinase inhibitor">
    <location>
        <begin position="1"/>
        <end position="72"/>
    </location>
</feature>
<feature type="site" description="Reactive bond for trypsin">
    <location>
        <begin position="16"/>
        <end position="17"/>
    </location>
</feature>
<feature type="site" description="Reactive bond for chymotrypsin">
    <location>
        <begin position="42"/>
        <end position="43"/>
    </location>
</feature>
<feature type="disulfide bond" evidence="1">
    <location>
        <begin position="8"/>
        <end position="61"/>
    </location>
</feature>
<feature type="disulfide bond" evidence="1">
    <location>
        <begin position="9"/>
        <end position="24"/>
    </location>
</feature>
<feature type="disulfide bond" evidence="1">
    <location>
        <begin position="12"/>
        <end position="57"/>
    </location>
</feature>
<feature type="disulfide bond" evidence="1">
    <location>
        <begin position="14"/>
        <end position="22"/>
    </location>
</feature>
<feature type="disulfide bond" evidence="1">
    <location>
        <begin position="31"/>
        <end position="38"/>
    </location>
</feature>
<feature type="disulfide bond" evidence="1">
    <location>
        <begin position="35"/>
        <end position="50"/>
    </location>
</feature>
<feature type="disulfide bond" evidence="1">
    <location>
        <begin position="40"/>
        <end position="48"/>
    </location>
</feature>
<name>IBB_VICSN</name>
<organism>
    <name type="scientific">Vicia sativa subsp. nigra</name>
    <name type="common">Common vetch</name>
    <name type="synonym">Vicia angustifolia</name>
    <dbReference type="NCBI Taxonomy" id="3909"/>
    <lineage>
        <taxon>Eukaryota</taxon>
        <taxon>Viridiplantae</taxon>
        <taxon>Streptophyta</taxon>
        <taxon>Embryophyta</taxon>
        <taxon>Tracheophyta</taxon>
        <taxon>Spermatophyta</taxon>
        <taxon>Magnoliopsida</taxon>
        <taxon>eudicotyledons</taxon>
        <taxon>Gunneridae</taxon>
        <taxon>Pentapetalae</taxon>
        <taxon>rosids</taxon>
        <taxon>fabids</taxon>
        <taxon>Fabales</taxon>
        <taxon>Fabaceae</taxon>
        <taxon>Papilionoideae</taxon>
        <taxon>50 kb inversion clade</taxon>
        <taxon>NPAAA clade</taxon>
        <taxon>Hologalegina</taxon>
        <taxon>IRL clade</taxon>
        <taxon>Fabeae</taxon>
        <taxon>Vicia</taxon>
    </lineage>
</organism>
<accession>P01065</accession>